<sequence>MFQPCCSKSTMSRSGVAVNDSALQAFNELKLGKKVTFIIYKINDAKTEIVVEEEGTTDSYDTFLGKLPENDCRYAVYDFEYEISSGEGKRSKLVFFTWSPDTAPVRSKMIYASSKDSLRRALTGISTEIQGTDFSEVAYESVLERVSRGAGSH</sequence>
<name>COFI_YARLI</name>
<keyword id="KW-0009">Actin-binding</keyword>
<keyword id="KW-0131">Cell cycle</keyword>
<keyword id="KW-0132">Cell division</keyword>
<keyword id="KW-0963">Cytoplasm</keyword>
<keyword id="KW-0206">Cytoskeleton</keyword>
<keyword id="KW-0539">Nucleus</keyword>
<keyword id="KW-1185">Reference proteome</keyword>
<accession>Q6C0Y0</accession>
<protein>
    <recommendedName>
        <fullName>Cofilin</fullName>
    </recommendedName>
    <alternativeName>
        <fullName>Actin-depolymerizing factor 1</fullName>
    </alternativeName>
</protein>
<reference key="1">
    <citation type="journal article" date="2004" name="Nature">
        <title>Genome evolution in yeasts.</title>
        <authorList>
            <person name="Dujon B."/>
            <person name="Sherman D."/>
            <person name="Fischer G."/>
            <person name="Durrens P."/>
            <person name="Casaregola S."/>
            <person name="Lafontaine I."/>
            <person name="de Montigny J."/>
            <person name="Marck C."/>
            <person name="Neuveglise C."/>
            <person name="Talla E."/>
            <person name="Goffard N."/>
            <person name="Frangeul L."/>
            <person name="Aigle M."/>
            <person name="Anthouard V."/>
            <person name="Babour A."/>
            <person name="Barbe V."/>
            <person name="Barnay S."/>
            <person name="Blanchin S."/>
            <person name="Beckerich J.-M."/>
            <person name="Beyne E."/>
            <person name="Bleykasten C."/>
            <person name="Boisrame A."/>
            <person name="Boyer J."/>
            <person name="Cattolico L."/>
            <person name="Confanioleri F."/>
            <person name="de Daruvar A."/>
            <person name="Despons L."/>
            <person name="Fabre E."/>
            <person name="Fairhead C."/>
            <person name="Ferry-Dumazet H."/>
            <person name="Groppi A."/>
            <person name="Hantraye F."/>
            <person name="Hennequin C."/>
            <person name="Jauniaux N."/>
            <person name="Joyet P."/>
            <person name="Kachouri R."/>
            <person name="Kerrest A."/>
            <person name="Koszul R."/>
            <person name="Lemaire M."/>
            <person name="Lesur I."/>
            <person name="Ma L."/>
            <person name="Muller H."/>
            <person name="Nicaud J.-M."/>
            <person name="Nikolski M."/>
            <person name="Oztas S."/>
            <person name="Ozier-Kalogeropoulos O."/>
            <person name="Pellenz S."/>
            <person name="Potier S."/>
            <person name="Richard G.-F."/>
            <person name="Straub M.-L."/>
            <person name="Suleau A."/>
            <person name="Swennen D."/>
            <person name="Tekaia F."/>
            <person name="Wesolowski-Louvel M."/>
            <person name="Westhof E."/>
            <person name="Wirth B."/>
            <person name="Zeniou-Meyer M."/>
            <person name="Zivanovic Y."/>
            <person name="Bolotin-Fukuhara M."/>
            <person name="Thierry A."/>
            <person name="Bouchier C."/>
            <person name="Caudron B."/>
            <person name="Scarpelli C."/>
            <person name="Gaillardin C."/>
            <person name="Weissenbach J."/>
            <person name="Wincker P."/>
            <person name="Souciet J.-L."/>
        </authorList>
    </citation>
    <scope>NUCLEOTIDE SEQUENCE [LARGE SCALE GENOMIC DNA]</scope>
    <source>
        <strain>CLIB 122 / E 150</strain>
    </source>
</reference>
<organism>
    <name type="scientific">Yarrowia lipolytica (strain CLIB 122 / E 150)</name>
    <name type="common">Yeast</name>
    <name type="synonym">Candida lipolytica</name>
    <dbReference type="NCBI Taxonomy" id="284591"/>
    <lineage>
        <taxon>Eukaryota</taxon>
        <taxon>Fungi</taxon>
        <taxon>Dikarya</taxon>
        <taxon>Ascomycota</taxon>
        <taxon>Saccharomycotina</taxon>
        <taxon>Dipodascomycetes</taxon>
        <taxon>Dipodascales</taxon>
        <taxon>Dipodascales incertae sedis</taxon>
        <taxon>Yarrowia</taxon>
    </lineage>
</organism>
<evidence type="ECO:0000250" key="1"/>
<evidence type="ECO:0000255" key="2">
    <source>
        <dbReference type="PROSITE-ProRule" id="PRU00599"/>
    </source>
</evidence>
<evidence type="ECO:0000305" key="3"/>
<feature type="chain" id="PRO_0000255629" description="Cofilin">
    <location>
        <begin position="1"/>
        <end position="153"/>
    </location>
</feature>
<feature type="domain" description="ADF-H" evidence="2">
    <location>
        <begin position="15"/>
        <end position="147"/>
    </location>
</feature>
<dbReference type="EMBL" id="CR382132">
    <property type="protein sequence ID" value="CAG78491.1"/>
    <property type="molecule type" value="Genomic_DNA"/>
</dbReference>
<dbReference type="RefSeq" id="XP_505682.1">
    <property type="nucleotide sequence ID" value="XM_505682.1"/>
</dbReference>
<dbReference type="SMR" id="Q6C0Y0"/>
<dbReference type="FunCoup" id="Q6C0Y0">
    <property type="interactions" value="839"/>
</dbReference>
<dbReference type="STRING" id="284591.Q6C0Y0"/>
<dbReference type="EnsemblFungi" id="CAG78491">
    <property type="protein sequence ID" value="CAG78491"/>
    <property type="gene ID" value="YALI0_F20856g"/>
</dbReference>
<dbReference type="VEuPathDB" id="FungiDB:YALI0_F20856g"/>
<dbReference type="HOGENOM" id="CLU_094004_3_2_1"/>
<dbReference type="InParanoid" id="Q6C0Y0"/>
<dbReference type="OMA" id="QCRFAVY"/>
<dbReference type="OrthoDB" id="31433at4891"/>
<dbReference type="Proteomes" id="UP000001300">
    <property type="component" value="Chromosome F"/>
</dbReference>
<dbReference type="GO" id="GO:0030479">
    <property type="term" value="C:actin cortical patch"/>
    <property type="evidence" value="ECO:0000318"/>
    <property type="project" value="GO_Central"/>
</dbReference>
<dbReference type="GO" id="GO:0015629">
    <property type="term" value="C:actin cytoskeleton"/>
    <property type="evidence" value="ECO:0000318"/>
    <property type="project" value="GO_Central"/>
</dbReference>
<dbReference type="GO" id="GO:0005737">
    <property type="term" value="C:cytoplasm"/>
    <property type="evidence" value="ECO:0000318"/>
    <property type="project" value="GO_Central"/>
</dbReference>
<dbReference type="GO" id="GO:0016363">
    <property type="term" value="C:nuclear matrix"/>
    <property type="evidence" value="ECO:0007669"/>
    <property type="project" value="UniProtKB-SubCell"/>
</dbReference>
<dbReference type="GO" id="GO:0051015">
    <property type="term" value="F:actin filament binding"/>
    <property type="evidence" value="ECO:0000318"/>
    <property type="project" value="GO_Central"/>
</dbReference>
<dbReference type="GO" id="GO:0030042">
    <property type="term" value="P:actin filament depolymerization"/>
    <property type="evidence" value="ECO:0000318"/>
    <property type="project" value="GO_Central"/>
</dbReference>
<dbReference type="GO" id="GO:0051014">
    <property type="term" value="P:actin filament severing"/>
    <property type="evidence" value="ECO:0000318"/>
    <property type="project" value="GO_Central"/>
</dbReference>
<dbReference type="GO" id="GO:0051301">
    <property type="term" value="P:cell division"/>
    <property type="evidence" value="ECO:0007669"/>
    <property type="project" value="UniProtKB-KW"/>
</dbReference>
<dbReference type="GO" id="GO:0006897">
    <property type="term" value="P:endocytosis"/>
    <property type="evidence" value="ECO:0007669"/>
    <property type="project" value="EnsemblFungi"/>
</dbReference>
<dbReference type="GO" id="GO:0043001">
    <property type="term" value="P:Golgi to plasma membrane protein transport"/>
    <property type="evidence" value="ECO:0007669"/>
    <property type="project" value="EnsemblFungi"/>
</dbReference>
<dbReference type="CDD" id="cd11286">
    <property type="entry name" value="ADF_cofilin_like"/>
    <property type="match status" value="1"/>
</dbReference>
<dbReference type="FunFam" id="3.40.20.10:FF:000060">
    <property type="entry name" value="Cofilin"/>
    <property type="match status" value="1"/>
</dbReference>
<dbReference type="Gene3D" id="3.40.20.10">
    <property type="entry name" value="Severin"/>
    <property type="match status" value="1"/>
</dbReference>
<dbReference type="InterPro" id="IPR002108">
    <property type="entry name" value="ADF-H"/>
</dbReference>
<dbReference type="InterPro" id="IPR029006">
    <property type="entry name" value="ADF-H/Gelsolin-like_dom_sf"/>
</dbReference>
<dbReference type="InterPro" id="IPR017904">
    <property type="entry name" value="ADF/Cofilin"/>
</dbReference>
<dbReference type="PANTHER" id="PTHR11913">
    <property type="entry name" value="COFILIN-RELATED"/>
    <property type="match status" value="1"/>
</dbReference>
<dbReference type="Pfam" id="PF00241">
    <property type="entry name" value="Cofilin_ADF"/>
    <property type="match status" value="1"/>
</dbReference>
<dbReference type="SMART" id="SM00102">
    <property type="entry name" value="ADF"/>
    <property type="match status" value="1"/>
</dbReference>
<dbReference type="SUPFAM" id="SSF55753">
    <property type="entry name" value="Actin depolymerizing proteins"/>
    <property type="match status" value="1"/>
</dbReference>
<dbReference type="PROSITE" id="PS51263">
    <property type="entry name" value="ADF_H"/>
    <property type="match status" value="1"/>
</dbReference>
<comment type="function">
    <text evidence="1">Controls reversibly actin polymerization and depolymerization in a pH-sensitive manner. It has the ability to bind G- and F-actin in a 1:1 ratio of cofilin to actin. Binding to F-actin is regulated by tropomyosin. It is the major component of intranuclear and cytoplasmic actin rods. Required for accumulation of actin at the cell division site via depolymerizing actin at the cell ends. In association with myosin II has a role in the assembly of the contractile ring via severing actin filaments. Involved in the maintenance of the contractile ring once formed. In association with profilin and capping protein, has a role in the mitotic reorganization of the actin cytoskeleton (By similarity).</text>
</comment>
<comment type="subcellular location">
    <subcellularLocation>
        <location evidence="1">Cytoplasm</location>
    </subcellularLocation>
    <subcellularLocation>
        <location evidence="1">Cytoplasm</location>
        <location evidence="1">Cytoskeleton</location>
    </subcellularLocation>
    <subcellularLocation>
        <location evidence="1">Nucleus matrix</location>
    </subcellularLocation>
    <text evidence="1">Throughout the cytoplasm (but not on the cytoplasmic cables) and major component of the cortical actin cytoskeleton.</text>
</comment>
<comment type="similarity">
    <text evidence="3">Belongs to the actin-binding proteins ADF family.</text>
</comment>
<gene>
    <name type="primary">COF1</name>
    <name type="ordered locus">YALI0F20856g</name>
</gene>
<proteinExistence type="inferred from homology"/>